<keyword id="KW-0010">Activator</keyword>
<keyword id="KW-0067">ATP-binding</keyword>
<keyword id="KW-0238">DNA-binding</keyword>
<keyword id="KW-0347">Helicase</keyword>
<keyword id="KW-0378">Hydrolase</keyword>
<keyword id="KW-0547">Nucleotide-binding</keyword>
<keyword id="KW-1185">Reference proteome</keyword>
<keyword id="KW-0804">Transcription</keyword>
<keyword id="KW-0805">Transcription regulation</keyword>
<dbReference type="EC" id="3.6.4.-" evidence="1"/>
<dbReference type="EMBL" id="AE015451">
    <property type="protein sequence ID" value="AAN66770.1"/>
    <property type="molecule type" value="Genomic_DNA"/>
</dbReference>
<dbReference type="RefSeq" id="NP_743306.1">
    <property type="nucleotide sequence ID" value="NC_002947.4"/>
</dbReference>
<dbReference type="RefSeq" id="WP_010952303.1">
    <property type="nucleotide sequence ID" value="NZ_CP169744.1"/>
</dbReference>
<dbReference type="SMR" id="Q88NR0"/>
<dbReference type="STRING" id="160488.PP_1145"/>
<dbReference type="PaxDb" id="160488-PP_1145"/>
<dbReference type="GeneID" id="83678493"/>
<dbReference type="KEGG" id="ppu:PP_1145"/>
<dbReference type="PATRIC" id="fig|160488.4.peg.1215"/>
<dbReference type="eggNOG" id="COG0553">
    <property type="taxonomic scope" value="Bacteria"/>
</dbReference>
<dbReference type="HOGENOM" id="CLU_011520_0_0_6"/>
<dbReference type="OrthoDB" id="9814088at2"/>
<dbReference type="PhylomeDB" id="Q88NR0"/>
<dbReference type="BioCyc" id="PPUT160488:G1G01-1223-MONOMER"/>
<dbReference type="Proteomes" id="UP000000556">
    <property type="component" value="Chromosome"/>
</dbReference>
<dbReference type="GO" id="GO:0005524">
    <property type="term" value="F:ATP binding"/>
    <property type="evidence" value="ECO:0007669"/>
    <property type="project" value="UniProtKB-UniRule"/>
</dbReference>
<dbReference type="GO" id="GO:0003677">
    <property type="term" value="F:DNA binding"/>
    <property type="evidence" value="ECO:0007669"/>
    <property type="project" value="UniProtKB-KW"/>
</dbReference>
<dbReference type="GO" id="GO:0004386">
    <property type="term" value="F:helicase activity"/>
    <property type="evidence" value="ECO:0007669"/>
    <property type="project" value="UniProtKB-UniRule"/>
</dbReference>
<dbReference type="GO" id="GO:0016817">
    <property type="term" value="F:hydrolase activity, acting on acid anhydrides"/>
    <property type="evidence" value="ECO:0007669"/>
    <property type="project" value="InterPro"/>
</dbReference>
<dbReference type="GO" id="GO:0006355">
    <property type="term" value="P:regulation of DNA-templated transcription"/>
    <property type="evidence" value="ECO:0007669"/>
    <property type="project" value="UniProtKB-UniRule"/>
</dbReference>
<dbReference type="CDD" id="cd18011">
    <property type="entry name" value="DEXDc_RapA"/>
    <property type="match status" value="1"/>
</dbReference>
<dbReference type="CDD" id="cd18793">
    <property type="entry name" value="SF2_C_SNF"/>
    <property type="match status" value="1"/>
</dbReference>
<dbReference type="Gene3D" id="2.30.30.140">
    <property type="match status" value="1"/>
</dbReference>
<dbReference type="Gene3D" id="2.30.30.930">
    <property type="match status" value="1"/>
</dbReference>
<dbReference type="Gene3D" id="3.30.360.80">
    <property type="match status" value="1"/>
</dbReference>
<dbReference type="Gene3D" id="6.10.140.1500">
    <property type="match status" value="1"/>
</dbReference>
<dbReference type="Gene3D" id="6.10.140.2230">
    <property type="match status" value="1"/>
</dbReference>
<dbReference type="Gene3D" id="3.40.50.300">
    <property type="entry name" value="P-loop containing nucleotide triphosphate hydrolases"/>
    <property type="match status" value="1"/>
</dbReference>
<dbReference type="Gene3D" id="3.40.50.10810">
    <property type="entry name" value="Tandem AAA-ATPase domain"/>
    <property type="match status" value="1"/>
</dbReference>
<dbReference type="HAMAP" id="MF_01821">
    <property type="entry name" value="Helicase_RapA"/>
    <property type="match status" value="1"/>
</dbReference>
<dbReference type="InterPro" id="IPR014001">
    <property type="entry name" value="Helicase_ATP-bd"/>
</dbReference>
<dbReference type="InterPro" id="IPR001650">
    <property type="entry name" value="Helicase_C-like"/>
</dbReference>
<dbReference type="InterPro" id="IPR023949">
    <property type="entry name" value="Helicase_RapA"/>
</dbReference>
<dbReference type="InterPro" id="IPR027417">
    <property type="entry name" value="P-loop_NTPase"/>
</dbReference>
<dbReference type="InterPro" id="IPR022737">
    <property type="entry name" value="RapA_C"/>
</dbReference>
<dbReference type="InterPro" id="IPR038718">
    <property type="entry name" value="SNF2-like_sf"/>
</dbReference>
<dbReference type="InterPro" id="IPR049730">
    <property type="entry name" value="SNF2/RAD54-like_C"/>
</dbReference>
<dbReference type="InterPro" id="IPR000330">
    <property type="entry name" value="SNF2_N"/>
</dbReference>
<dbReference type="InterPro" id="IPR040765">
    <property type="entry name" value="Tudor_1_RapA"/>
</dbReference>
<dbReference type="InterPro" id="IPR040766">
    <property type="entry name" value="Tudor_2_RapA"/>
</dbReference>
<dbReference type="NCBIfam" id="NF003426">
    <property type="entry name" value="PRK04914.1"/>
    <property type="match status" value="1"/>
</dbReference>
<dbReference type="PANTHER" id="PTHR45766">
    <property type="entry name" value="DNA ANNEALING HELICASE AND ENDONUCLEASE ZRANB3 FAMILY MEMBER"/>
    <property type="match status" value="1"/>
</dbReference>
<dbReference type="PANTHER" id="PTHR45766:SF6">
    <property type="entry name" value="SWI_SNF-RELATED MATRIX-ASSOCIATED ACTIN-DEPENDENT REGULATOR OF CHROMATIN SUBFAMILY A-LIKE PROTEIN 1"/>
    <property type="match status" value="1"/>
</dbReference>
<dbReference type="Pfam" id="PF00271">
    <property type="entry name" value="Helicase_C"/>
    <property type="match status" value="1"/>
</dbReference>
<dbReference type="Pfam" id="PF12137">
    <property type="entry name" value="RapA_C"/>
    <property type="match status" value="1"/>
</dbReference>
<dbReference type="Pfam" id="PF00176">
    <property type="entry name" value="SNF2-rel_dom"/>
    <property type="match status" value="1"/>
</dbReference>
<dbReference type="Pfam" id="PF18339">
    <property type="entry name" value="Tudor_1_RapA"/>
    <property type="match status" value="1"/>
</dbReference>
<dbReference type="Pfam" id="PF18337">
    <property type="entry name" value="Tudor_RapA"/>
    <property type="match status" value="1"/>
</dbReference>
<dbReference type="SMART" id="SM00487">
    <property type="entry name" value="DEXDc"/>
    <property type="match status" value="1"/>
</dbReference>
<dbReference type="SMART" id="SM00490">
    <property type="entry name" value="HELICc"/>
    <property type="match status" value="1"/>
</dbReference>
<dbReference type="SUPFAM" id="SSF52540">
    <property type="entry name" value="P-loop containing nucleoside triphosphate hydrolases"/>
    <property type="match status" value="2"/>
</dbReference>
<dbReference type="PROSITE" id="PS51192">
    <property type="entry name" value="HELICASE_ATP_BIND_1"/>
    <property type="match status" value="1"/>
</dbReference>
<dbReference type="PROSITE" id="PS51194">
    <property type="entry name" value="HELICASE_CTER"/>
    <property type="match status" value="1"/>
</dbReference>
<name>RAPA_PSEPK</name>
<feature type="chain" id="PRO_0000207182" description="RNA polymerase-associated protein RapA">
    <location>
        <begin position="1"/>
        <end position="948"/>
    </location>
</feature>
<feature type="domain" description="Helicase ATP-binding" evidence="1">
    <location>
        <begin position="164"/>
        <end position="332"/>
    </location>
</feature>
<feature type="domain" description="Helicase C-terminal" evidence="1">
    <location>
        <begin position="473"/>
        <end position="627"/>
    </location>
</feature>
<feature type="short sequence motif" description="DEAH box">
    <location>
        <begin position="278"/>
        <end position="281"/>
    </location>
</feature>
<feature type="binding site" evidence="1">
    <location>
        <begin position="177"/>
        <end position="184"/>
    </location>
    <ligand>
        <name>ATP</name>
        <dbReference type="ChEBI" id="CHEBI:30616"/>
    </ligand>
</feature>
<protein>
    <recommendedName>
        <fullName evidence="1">RNA polymerase-associated protein RapA</fullName>
        <ecNumber evidence="1">3.6.4.-</ecNumber>
    </recommendedName>
    <alternativeName>
        <fullName evidence="1">ATP-dependent helicase HepA</fullName>
    </alternativeName>
</protein>
<sequence length="948" mass="105995">MAQQYQPGQRWISDSEAELGLGTILAQDGRLLTVLYPATGDTRQYSLRNAPLTRVRFSPGDQITHFEGWKLTVREVEDIDGLMVYHGLDGQNQPRTLPETQLSNFIQFRLASDRLFAGQIDPLSWFSLRYNTLQHTSKQMQSALWGLGGCRAQPIAHQLHIAREVADRSAPRVLLADEVGLGKTIEAGLVIHRQLLSGRASRVLILVPENLQHQWLVEMRRRFNLQVALFDAERFIESDASNPFEDAQLALVALEWLVDDEKAQDALFAAGWDLLVVDEAHHLVWHEDQVSAEYGLVEQLAQVIPGVLLLTATPEQLGQDSHFARLRLLDPNRFHDLAAFRAESEHYRPVAEAVQELLDEGRLSPKAHATILGFLGAEGEALLAAVSDGDTQASARLIRELLDRHGTGRVLFRNTRAAIQGFPERQLHPYPLPTPEQYRDLPAGEHAELYPEVAFQAQGEVADDERWWRFDPRVDWLIDTLKMLKRTKVLVICAHAETAMDLEDALRVRSGIPASVFHEGMSILERDRAAAYFADEEFGAQVLICSEIGSEGRNFQFAHHLVMFDLPAHPDLLEQRIGRLDRIGQKHTIQLHIPYLQDSPQERLFQWYHEGLNAFLNTCPTGNALQHQFGPRLLPLLEGGENKAWDTLVADARSERERLEAELHTGRDRLLELNSGGAGEGQALVEAILEQDDQFALPIYMETLFDAFGIDSEDHSENALILKPSEKMLDASFPLGDDEGVTITYDRGQALSREDMQFLTWEHPMVQGGMDLVLSGSMGNTAVALIKNKALKPGTVLLELLFVSEVVAPRSLQLGRYLPPAALRCLLDANGNDLASRVAFETLNDQLESVPRASANKFVQAQRDVLAKRISGGEEKILPAHNERVAEAQRRLAAEADEELARLVALQAVNPSVRDSEIDALRKRREDGLAMLEKAALRLEAIRVLVAG</sequence>
<evidence type="ECO:0000255" key="1">
    <source>
        <dbReference type="HAMAP-Rule" id="MF_01821"/>
    </source>
</evidence>
<reference key="1">
    <citation type="journal article" date="2002" name="Environ. Microbiol.">
        <title>Complete genome sequence and comparative analysis of the metabolically versatile Pseudomonas putida KT2440.</title>
        <authorList>
            <person name="Nelson K.E."/>
            <person name="Weinel C."/>
            <person name="Paulsen I.T."/>
            <person name="Dodson R.J."/>
            <person name="Hilbert H."/>
            <person name="Martins dos Santos V.A.P."/>
            <person name="Fouts D.E."/>
            <person name="Gill S.R."/>
            <person name="Pop M."/>
            <person name="Holmes M."/>
            <person name="Brinkac L.M."/>
            <person name="Beanan M.J."/>
            <person name="DeBoy R.T."/>
            <person name="Daugherty S.C."/>
            <person name="Kolonay J.F."/>
            <person name="Madupu R."/>
            <person name="Nelson W.C."/>
            <person name="White O."/>
            <person name="Peterson J.D."/>
            <person name="Khouri H.M."/>
            <person name="Hance I."/>
            <person name="Chris Lee P."/>
            <person name="Holtzapple E.K."/>
            <person name="Scanlan D."/>
            <person name="Tran K."/>
            <person name="Moazzez A."/>
            <person name="Utterback T.R."/>
            <person name="Rizzo M."/>
            <person name="Lee K."/>
            <person name="Kosack D."/>
            <person name="Moestl D."/>
            <person name="Wedler H."/>
            <person name="Lauber J."/>
            <person name="Stjepandic D."/>
            <person name="Hoheisel J."/>
            <person name="Straetz M."/>
            <person name="Heim S."/>
            <person name="Kiewitz C."/>
            <person name="Eisen J.A."/>
            <person name="Timmis K.N."/>
            <person name="Duesterhoeft A."/>
            <person name="Tuemmler B."/>
            <person name="Fraser C.M."/>
        </authorList>
    </citation>
    <scope>NUCLEOTIDE SEQUENCE [LARGE SCALE GENOMIC DNA]</scope>
    <source>
        <strain>ATCC 47054 / DSM 6125 / CFBP 8728 / NCIMB 11950 / KT2440</strain>
    </source>
</reference>
<proteinExistence type="inferred from homology"/>
<organism>
    <name type="scientific">Pseudomonas putida (strain ATCC 47054 / DSM 6125 / CFBP 8728 / NCIMB 11950 / KT2440)</name>
    <dbReference type="NCBI Taxonomy" id="160488"/>
    <lineage>
        <taxon>Bacteria</taxon>
        <taxon>Pseudomonadati</taxon>
        <taxon>Pseudomonadota</taxon>
        <taxon>Gammaproteobacteria</taxon>
        <taxon>Pseudomonadales</taxon>
        <taxon>Pseudomonadaceae</taxon>
        <taxon>Pseudomonas</taxon>
    </lineage>
</organism>
<gene>
    <name evidence="1" type="primary">rapA</name>
    <name type="synonym">hepA</name>
    <name type="ordered locus">PP_1145</name>
</gene>
<comment type="function">
    <text evidence="1">Transcription regulator that activates transcription by stimulating RNA polymerase (RNAP) recycling in case of stress conditions such as supercoiled DNA or high salt concentrations. Probably acts by releasing the RNAP, when it is trapped or immobilized on tightly supercoiled DNA. Does not activate transcription on linear DNA. Probably not involved in DNA repair.</text>
</comment>
<comment type="subunit">
    <text evidence="1">Interacts with the RNAP. Has a higher affinity for the core RNAP than for the holoenzyme. Its ATPase activity is stimulated by binding to RNAP.</text>
</comment>
<comment type="similarity">
    <text evidence="1">Belongs to the SNF2/RAD54 helicase family. RapA subfamily.</text>
</comment>
<accession>Q88NR0</accession>